<sequence>MKTSVLLFMLGLTFLFDGLAAINLQEGERTCYDIGELCSSDKPCCSGYYCSPRWGWCIYSTRGGR</sequence>
<accession>B1P1D4</accession>
<reference key="1">
    <citation type="journal article" date="2008" name="Cell. Mol. Life Sci.">
        <title>Molecular diversity and evolution of cystine knot toxins of the tarantula Chilobrachys jingzhao.</title>
        <authorList>
            <person name="Chen J."/>
            <person name="Deng M."/>
            <person name="He Q."/>
            <person name="Meng E."/>
            <person name="Jiang L."/>
            <person name="Liao Z."/>
            <person name="Rong M."/>
            <person name="Liang S."/>
        </authorList>
    </citation>
    <scope>NUCLEOTIDE SEQUENCE [LARGE SCALE MRNA]</scope>
    <source>
        <tissue>Venom gland</tissue>
    </source>
</reference>
<reference key="2">
    <citation type="journal article" date="2007" name="Proteomics">
        <title>Proteomic and peptidomic analysis of the venom from Chinese tarantula Chilobrachys jingzhao.</title>
        <authorList>
            <person name="Liao Z."/>
            <person name="Cao J."/>
            <person name="Li S."/>
            <person name="Yan X."/>
            <person name="Hu W."/>
            <person name="He Q."/>
            <person name="Chen J."/>
            <person name="Tang J."/>
            <person name="Xie J."/>
            <person name="Liang S."/>
        </authorList>
    </citation>
    <scope>PROTEIN SEQUENCE OF 30-41</scope>
    <scope>IDENTIFICATION BY MASS SPECTROMETRY</scope>
    <source>
        <tissue>Venom</tissue>
    </source>
</reference>
<comment type="function">
    <text>Probable ion channel inhibitor.</text>
</comment>
<comment type="subcellular location">
    <subcellularLocation>
        <location>Secreted</location>
    </subcellularLocation>
</comment>
<comment type="tissue specificity">
    <text>Expressed by the venom gland.</text>
</comment>
<comment type="domain">
    <text evidence="1">The presence of a 'disulfide through disulfide knot' structurally defines this protein as a knottin.</text>
</comment>
<comment type="similarity">
    <text evidence="4">Belongs to the neurotoxin 10 (Hwtx-1) family. 31 (Jztx-15) subfamily.</text>
</comment>
<dbReference type="EMBL" id="EU233865">
    <property type="protein sequence ID" value="ABY71684.1"/>
    <property type="molecule type" value="mRNA"/>
</dbReference>
<dbReference type="SMR" id="B1P1D4"/>
<dbReference type="ArachnoServer" id="AS000813">
    <property type="toxin name" value="U12-theraphotoxin-Cg1a"/>
</dbReference>
<dbReference type="GO" id="GO:0005576">
    <property type="term" value="C:extracellular region"/>
    <property type="evidence" value="ECO:0007669"/>
    <property type="project" value="UniProtKB-SubCell"/>
</dbReference>
<dbReference type="GO" id="GO:0008200">
    <property type="term" value="F:ion channel inhibitor activity"/>
    <property type="evidence" value="ECO:0007669"/>
    <property type="project" value="InterPro"/>
</dbReference>
<dbReference type="GO" id="GO:0090729">
    <property type="term" value="F:toxin activity"/>
    <property type="evidence" value="ECO:0007669"/>
    <property type="project" value="UniProtKB-KW"/>
</dbReference>
<dbReference type="InterPro" id="IPR011696">
    <property type="entry name" value="Huwentoxin-1"/>
</dbReference>
<dbReference type="Pfam" id="PF07740">
    <property type="entry name" value="Toxin_12"/>
    <property type="match status" value="1"/>
</dbReference>
<dbReference type="SUPFAM" id="SSF57059">
    <property type="entry name" value="omega toxin-like"/>
    <property type="match status" value="1"/>
</dbReference>
<keyword id="KW-0903">Direct protein sequencing</keyword>
<keyword id="KW-1015">Disulfide bond</keyword>
<keyword id="KW-0872">Ion channel impairing toxin</keyword>
<keyword id="KW-0960">Knottin</keyword>
<keyword id="KW-0964">Secreted</keyword>
<keyword id="KW-0732">Signal</keyword>
<keyword id="KW-0800">Toxin</keyword>
<protein>
    <recommendedName>
        <fullName>U12-theraphotoxin-Cg1a</fullName>
        <shortName>U12-TRTX-Cg1a</shortName>
    </recommendedName>
    <alternativeName>
        <fullName>Jingzhaotoxin-15</fullName>
        <shortName>JZTX-15</shortName>
    </alternativeName>
    <alternativeName>
        <fullName>Peptide F4-19.71</fullName>
    </alternativeName>
</protein>
<organism>
    <name type="scientific">Chilobrachys guangxiensis</name>
    <name type="common">Chinese earth tiger tarantula</name>
    <name type="synonym">Chilobrachys jingzhao</name>
    <dbReference type="NCBI Taxonomy" id="278060"/>
    <lineage>
        <taxon>Eukaryota</taxon>
        <taxon>Metazoa</taxon>
        <taxon>Ecdysozoa</taxon>
        <taxon>Arthropoda</taxon>
        <taxon>Chelicerata</taxon>
        <taxon>Arachnida</taxon>
        <taxon>Araneae</taxon>
        <taxon>Mygalomorphae</taxon>
        <taxon>Theraphosidae</taxon>
        <taxon>Chilobrachys</taxon>
    </lineage>
</organism>
<evidence type="ECO:0000250" key="1"/>
<evidence type="ECO:0000255" key="2"/>
<evidence type="ECO:0000269" key="3">
    <source>
    </source>
</evidence>
<evidence type="ECO:0000305" key="4"/>
<name>JZT15_CHIGU</name>
<feature type="signal peptide" evidence="2">
    <location>
        <begin position="1"/>
        <end position="21"/>
    </location>
</feature>
<feature type="propeptide" id="PRO_0000398429" evidence="3">
    <location>
        <begin position="22"/>
        <end position="29"/>
    </location>
</feature>
<feature type="peptide" id="PRO_0000398430" description="U12-theraphotoxin-Cg1a">
    <location>
        <begin position="30"/>
        <end position="65"/>
    </location>
</feature>
<feature type="disulfide bond" evidence="1">
    <location>
        <begin position="31"/>
        <end position="45"/>
    </location>
</feature>
<feature type="disulfide bond" evidence="1">
    <location>
        <begin position="38"/>
        <end position="50"/>
    </location>
</feature>
<feature type="disulfide bond" evidence="1">
    <location>
        <begin position="44"/>
        <end position="57"/>
    </location>
</feature>
<proteinExistence type="evidence at protein level"/>